<gene>
    <name evidence="1" type="primary">cdd</name>
    <name type="ordered locus">SARI_00718</name>
</gene>
<accession>A9MKS5</accession>
<dbReference type="EC" id="3.5.4.5" evidence="1"/>
<dbReference type="EMBL" id="CP000880">
    <property type="protein sequence ID" value="ABX20641.1"/>
    <property type="molecule type" value="Genomic_DNA"/>
</dbReference>
<dbReference type="SMR" id="A9MKS5"/>
<dbReference type="STRING" id="41514.SARI_00718"/>
<dbReference type="KEGG" id="ses:SARI_00718"/>
<dbReference type="HOGENOM" id="CLU_052424_0_0_6"/>
<dbReference type="Proteomes" id="UP000002084">
    <property type="component" value="Chromosome"/>
</dbReference>
<dbReference type="GO" id="GO:0005829">
    <property type="term" value="C:cytosol"/>
    <property type="evidence" value="ECO:0007669"/>
    <property type="project" value="TreeGrafter"/>
</dbReference>
<dbReference type="GO" id="GO:0004126">
    <property type="term" value="F:cytidine deaminase activity"/>
    <property type="evidence" value="ECO:0007669"/>
    <property type="project" value="UniProtKB-UniRule"/>
</dbReference>
<dbReference type="GO" id="GO:0042802">
    <property type="term" value="F:identical protein binding"/>
    <property type="evidence" value="ECO:0007669"/>
    <property type="project" value="UniProtKB-ARBA"/>
</dbReference>
<dbReference type="GO" id="GO:0008270">
    <property type="term" value="F:zinc ion binding"/>
    <property type="evidence" value="ECO:0007669"/>
    <property type="project" value="UniProtKB-UniRule"/>
</dbReference>
<dbReference type="GO" id="GO:0009972">
    <property type="term" value="P:cytidine deamination"/>
    <property type="evidence" value="ECO:0007669"/>
    <property type="project" value="InterPro"/>
</dbReference>
<dbReference type="CDD" id="cd01283">
    <property type="entry name" value="cytidine_deaminase"/>
    <property type="match status" value="2"/>
</dbReference>
<dbReference type="FunFam" id="3.40.140.10:FF:000006">
    <property type="entry name" value="Cytidine deaminase"/>
    <property type="match status" value="1"/>
</dbReference>
<dbReference type="FunFam" id="3.40.140.10:FF:000007">
    <property type="entry name" value="Cytidine deaminase"/>
    <property type="match status" value="1"/>
</dbReference>
<dbReference type="Gene3D" id="3.40.140.10">
    <property type="entry name" value="Cytidine Deaminase, domain 2"/>
    <property type="match status" value="2"/>
</dbReference>
<dbReference type="HAMAP" id="MF_01558">
    <property type="entry name" value="Cyt_deam"/>
    <property type="match status" value="1"/>
</dbReference>
<dbReference type="InterPro" id="IPR016192">
    <property type="entry name" value="APOBEC/CMP_deaminase_Zn-bd"/>
</dbReference>
<dbReference type="InterPro" id="IPR002125">
    <property type="entry name" value="CMP_dCMP_dom"/>
</dbReference>
<dbReference type="InterPro" id="IPR013171">
    <property type="entry name" value="Cyd/dCyd_deaminase_Zn-bd"/>
</dbReference>
<dbReference type="InterPro" id="IPR050202">
    <property type="entry name" value="Cyt/Deoxycyt_deaminase"/>
</dbReference>
<dbReference type="InterPro" id="IPR006263">
    <property type="entry name" value="Cyt_deam_dimer"/>
</dbReference>
<dbReference type="InterPro" id="IPR016193">
    <property type="entry name" value="Cytidine_deaminase-like"/>
</dbReference>
<dbReference type="InterPro" id="IPR020797">
    <property type="entry name" value="Cytidine_deaminase_bacteria"/>
</dbReference>
<dbReference type="NCBIfam" id="TIGR01355">
    <property type="entry name" value="cyt_deam_dimer"/>
    <property type="match status" value="1"/>
</dbReference>
<dbReference type="NCBIfam" id="NF006537">
    <property type="entry name" value="PRK09027.1"/>
    <property type="match status" value="1"/>
</dbReference>
<dbReference type="PANTHER" id="PTHR11644">
    <property type="entry name" value="CYTIDINE DEAMINASE"/>
    <property type="match status" value="1"/>
</dbReference>
<dbReference type="PANTHER" id="PTHR11644:SF2">
    <property type="entry name" value="CYTIDINE DEAMINASE"/>
    <property type="match status" value="1"/>
</dbReference>
<dbReference type="Pfam" id="PF00383">
    <property type="entry name" value="dCMP_cyt_deam_1"/>
    <property type="match status" value="1"/>
</dbReference>
<dbReference type="Pfam" id="PF08211">
    <property type="entry name" value="dCMP_cyt_deam_2"/>
    <property type="match status" value="1"/>
</dbReference>
<dbReference type="PIRSF" id="PIRSF006334">
    <property type="entry name" value="Cdd_plus_pseudo"/>
    <property type="match status" value="1"/>
</dbReference>
<dbReference type="SUPFAM" id="SSF53927">
    <property type="entry name" value="Cytidine deaminase-like"/>
    <property type="match status" value="2"/>
</dbReference>
<dbReference type="PROSITE" id="PS00903">
    <property type="entry name" value="CYT_DCMP_DEAMINASES_1"/>
    <property type="match status" value="1"/>
</dbReference>
<dbReference type="PROSITE" id="PS51747">
    <property type="entry name" value="CYT_DCMP_DEAMINASES_2"/>
    <property type="match status" value="2"/>
</dbReference>
<evidence type="ECO:0000255" key="1">
    <source>
        <dbReference type="HAMAP-Rule" id="MF_01558"/>
    </source>
</evidence>
<evidence type="ECO:0000255" key="2">
    <source>
        <dbReference type="PROSITE-ProRule" id="PRU01083"/>
    </source>
</evidence>
<proteinExistence type="inferred from homology"/>
<keyword id="KW-0378">Hydrolase</keyword>
<keyword id="KW-0479">Metal-binding</keyword>
<keyword id="KW-1185">Reference proteome</keyword>
<keyword id="KW-0862">Zinc</keyword>
<protein>
    <recommendedName>
        <fullName evidence="1">Cytidine deaminase</fullName>
        <ecNumber evidence="1">3.5.4.5</ecNumber>
    </recommendedName>
    <alternativeName>
        <fullName evidence="1">Cytidine aminohydrolase</fullName>
        <shortName evidence="1">CDA</shortName>
    </alternativeName>
</protein>
<sequence>MHPRFQTAFAQLADNLQSALAPILADHHFPAMLAAEQVSTLKNATGLDEDALAFALLPLAAACARTDLSHFNVGAIARGVSGNWYFGANMEFLGATMQQTVHAEQSAISHAWLCGEKGLAAVTVNYTPCGHCRQFMNELNSGLDLRIHLPGRAPHTLRDYLPDAFGPKDLEIKTLLMDEQDHGFALTGDTLTQAAITAANKSHMPYSQSPSGVALECKDGRIFTGSYAENAAFNPTLPPLQGALNLLSLNGYDYPDIQRAILAEKGDAALIQWDATAATLKALGCHNIDRVLLG</sequence>
<name>CDD_SALAR</name>
<comment type="function">
    <text evidence="1">This enzyme scavenges exogenous and endogenous cytidine and 2'-deoxycytidine for UMP synthesis.</text>
</comment>
<comment type="catalytic activity">
    <reaction evidence="1">
        <text>cytidine + H2O + H(+) = uridine + NH4(+)</text>
        <dbReference type="Rhea" id="RHEA:16069"/>
        <dbReference type="ChEBI" id="CHEBI:15377"/>
        <dbReference type="ChEBI" id="CHEBI:15378"/>
        <dbReference type="ChEBI" id="CHEBI:16704"/>
        <dbReference type="ChEBI" id="CHEBI:17562"/>
        <dbReference type="ChEBI" id="CHEBI:28938"/>
        <dbReference type="EC" id="3.5.4.5"/>
    </reaction>
</comment>
<comment type="catalytic activity">
    <reaction evidence="1">
        <text>2'-deoxycytidine + H2O + H(+) = 2'-deoxyuridine + NH4(+)</text>
        <dbReference type="Rhea" id="RHEA:13433"/>
        <dbReference type="ChEBI" id="CHEBI:15377"/>
        <dbReference type="ChEBI" id="CHEBI:15378"/>
        <dbReference type="ChEBI" id="CHEBI:15698"/>
        <dbReference type="ChEBI" id="CHEBI:16450"/>
        <dbReference type="ChEBI" id="CHEBI:28938"/>
        <dbReference type="EC" id="3.5.4.5"/>
    </reaction>
</comment>
<comment type="cofactor">
    <cofactor evidence="1">
        <name>Zn(2+)</name>
        <dbReference type="ChEBI" id="CHEBI:29105"/>
    </cofactor>
    <text evidence="1">Binds 1 zinc ion.</text>
</comment>
<comment type="subunit">
    <text evidence="1">Homodimer.</text>
</comment>
<comment type="similarity">
    <text evidence="1">Belongs to the cytidine and deoxycytidylate deaminase family.</text>
</comment>
<reference key="1">
    <citation type="submission" date="2007-11" db="EMBL/GenBank/DDBJ databases">
        <authorList>
            <consortium name="The Salmonella enterica serovar Arizonae Genome Sequencing Project"/>
            <person name="McClelland M."/>
            <person name="Sanderson E.K."/>
            <person name="Porwollik S."/>
            <person name="Spieth J."/>
            <person name="Clifton W.S."/>
            <person name="Fulton R."/>
            <person name="Chunyan W."/>
            <person name="Wollam A."/>
            <person name="Shah N."/>
            <person name="Pepin K."/>
            <person name="Bhonagiri V."/>
            <person name="Nash W."/>
            <person name="Johnson M."/>
            <person name="Thiruvilangam P."/>
            <person name="Wilson R."/>
        </authorList>
    </citation>
    <scope>NUCLEOTIDE SEQUENCE [LARGE SCALE GENOMIC DNA]</scope>
    <source>
        <strain>ATCC BAA-731 / CDC346-86 / RSK2980</strain>
    </source>
</reference>
<feature type="chain" id="PRO_1000087795" description="Cytidine deaminase">
    <location>
        <begin position="1"/>
        <end position="294"/>
    </location>
</feature>
<feature type="domain" description="CMP/dCMP-type deaminase 1" evidence="2">
    <location>
        <begin position="48"/>
        <end position="168"/>
    </location>
</feature>
<feature type="domain" description="CMP/dCMP-type deaminase 2" evidence="2">
    <location>
        <begin position="186"/>
        <end position="294"/>
    </location>
</feature>
<feature type="active site" description="Proton donor" evidence="1">
    <location>
        <position position="104"/>
    </location>
</feature>
<feature type="binding site" evidence="1">
    <location>
        <begin position="89"/>
        <end position="91"/>
    </location>
    <ligand>
        <name>substrate</name>
    </ligand>
</feature>
<feature type="binding site" evidence="1">
    <location>
        <position position="102"/>
    </location>
    <ligand>
        <name>Zn(2+)</name>
        <dbReference type="ChEBI" id="CHEBI:29105"/>
        <note>catalytic</note>
    </ligand>
</feature>
<feature type="binding site" evidence="1">
    <location>
        <position position="129"/>
    </location>
    <ligand>
        <name>Zn(2+)</name>
        <dbReference type="ChEBI" id="CHEBI:29105"/>
        <note>catalytic</note>
    </ligand>
</feature>
<feature type="binding site" evidence="1">
    <location>
        <position position="132"/>
    </location>
    <ligand>
        <name>Zn(2+)</name>
        <dbReference type="ChEBI" id="CHEBI:29105"/>
        <note>catalytic</note>
    </ligand>
</feature>
<organism>
    <name type="scientific">Salmonella arizonae (strain ATCC BAA-731 / CDC346-86 / RSK2980)</name>
    <dbReference type="NCBI Taxonomy" id="41514"/>
    <lineage>
        <taxon>Bacteria</taxon>
        <taxon>Pseudomonadati</taxon>
        <taxon>Pseudomonadota</taxon>
        <taxon>Gammaproteobacteria</taxon>
        <taxon>Enterobacterales</taxon>
        <taxon>Enterobacteriaceae</taxon>
        <taxon>Salmonella</taxon>
    </lineage>
</organism>